<proteinExistence type="inferred from homology"/>
<feature type="chain" id="PRO_1000018214" description="Tryptophan synthase alpha chain">
    <location>
        <begin position="1"/>
        <end position="273"/>
    </location>
</feature>
<feature type="active site" description="Proton acceptor" evidence="1">
    <location>
        <position position="49"/>
    </location>
</feature>
<feature type="active site" description="Proton acceptor" evidence="1">
    <location>
        <position position="60"/>
    </location>
</feature>
<keyword id="KW-0028">Amino-acid biosynthesis</keyword>
<keyword id="KW-0057">Aromatic amino acid biosynthesis</keyword>
<keyword id="KW-0456">Lyase</keyword>
<keyword id="KW-1185">Reference proteome</keyword>
<keyword id="KW-0822">Tryptophan biosynthesis</keyword>
<protein>
    <recommendedName>
        <fullName evidence="1">Tryptophan synthase alpha chain</fullName>
        <ecNumber evidence="1">4.2.1.20</ecNumber>
    </recommendedName>
</protein>
<name>TRPA_HALHL</name>
<gene>
    <name evidence="1" type="primary">trpA</name>
    <name type="ordered locus">Hhal_1803</name>
</gene>
<dbReference type="EC" id="4.2.1.20" evidence="1"/>
<dbReference type="EMBL" id="CP000544">
    <property type="protein sequence ID" value="ABM62567.1"/>
    <property type="molecule type" value="Genomic_DNA"/>
</dbReference>
<dbReference type="RefSeq" id="WP_011814589.1">
    <property type="nucleotide sequence ID" value="NC_008789.1"/>
</dbReference>
<dbReference type="SMR" id="A1WY05"/>
<dbReference type="STRING" id="349124.Hhal_1803"/>
<dbReference type="KEGG" id="hha:Hhal_1803"/>
<dbReference type="eggNOG" id="COG0159">
    <property type="taxonomic scope" value="Bacteria"/>
</dbReference>
<dbReference type="HOGENOM" id="CLU_016734_0_4_6"/>
<dbReference type="OrthoDB" id="9804578at2"/>
<dbReference type="UniPathway" id="UPA00035">
    <property type="reaction ID" value="UER00044"/>
</dbReference>
<dbReference type="Proteomes" id="UP000000647">
    <property type="component" value="Chromosome"/>
</dbReference>
<dbReference type="GO" id="GO:0005829">
    <property type="term" value="C:cytosol"/>
    <property type="evidence" value="ECO:0007669"/>
    <property type="project" value="TreeGrafter"/>
</dbReference>
<dbReference type="GO" id="GO:0004834">
    <property type="term" value="F:tryptophan synthase activity"/>
    <property type="evidence" value="ECO:0007669"/>
    <property type="project" value="UniProtKB-UniRule"/>
</dbReference>
<dbReference type="CDD" id="cd04724">
    <property type="entry name" value="Tryptophan_synthase_alpha"/>
    <property type="match status" value="1"/>
</dbReference>
<dbReference type="FunFam" id="3.20.20.70:FF:000037">
    <property type="entry name" value="Tryptophan synthase alpha chain"/>
    <property type="match status" value="1"/>
</dbReference>
<dbReference type="Gene3D" id="3.20.20.70">
    <property type="entry name" value="Aldolase class I"/>
    <property type="match status" value="1"/>
</dbReference>
<dbReference type="HAMAP" id="MF_00131">
    <property type="entry name" value="Trp_synth_alpha"/>
    <property type="match status" value="1"/>
</dbReference>
<dbReference type="InterPro" id="IPR013785">
    <property type="entry name" value="Aldolase_TIM"/>
</dbReference>
<dbReference type="InterPro" id="IPR011060">
    <property type="entry name" value="RibuloseP-bd_barrel"/>
</dbReference>
<dbReference type="InterPro" id="IPR018204">
    <property type="entry name" value="Trp_synthase_alpha_AS"/>
</dbReference>
<dbReference type="InterPro" id="IPR002028">
    <property type="entry name" value="Trp_synthase_suA"/>
</dbReference>
<dbReference type="NCBIfam" id="TIGR00262">
    <property type="entry name" value="trpA"/>
    <property type="match status" value="1"/>
</dbReference>
<dbReference type="PANTHER" id="PTHR43406:SF1">
    <property type="entry name" value="TRYPTOPHAN SYNTHASE ALPHA CHAIN, CHLOROPLASTIC"/>
    <property type="match status" value="1"/>
</dbReference>
<dbReference type="PANTHER" id="PTHR43406">
    <property type="entry name" value="TRYPTOPHAN SYNTHASE, ALPHA CHAIN"/>
    <property type="match status" value="1"/>
</dbReference>
<dbReference type="Pfam" id="PF00290">
    <property type="entry name" value="Trp_syntA"/>
    <property type="match status" value="1"/>
</dbReference>
<dbReference type="SUPFAM" id="SSF51366">
    <property type="entry name" value="Ribulose-phoshate binding barrel"/>
    <property type="match status" value="1"/>
</dbReference>
<dbReference type="PROSITE" id="PS00167">
    <property type="entry name" value="TRP_SYNTHASE_ALPHA"/>
    <property type="match status" value="1"/>
</dbReference>
<evidence type="ECO:0000255" key="1">
    <source>
        <dbReference type="HAMAP-Rule" id="MF_00131"/>
    </source>
</evidence>
<sequence>MSRIAERFRACRSAGRTALIPYITGGDPSPDDTVRLMHALVAGGADVIEIGVPFSDPMADGPVIQAACARALAAGTTPARLFEVVRRFREEDPDTPVVFMGYANILEAAGYRAFVRDAAAAGVDGLLTVDLPPEEAGALADEARVQGVDLIYLVAPNTSAERVERVCSVAGGFVYAVALKGVTGSADLDAGLVGQQVAGIRRVTDLPVAVGFGVRDPQSAAALAPCADGVIVGSALVRMIGEHGAAADLPERLRDAVLALRRAMDDTTTGGDS</sequence>
<reference key="1">
    <citation type="submission" date="2006-12" db="EMBL/GenBank/DDBJ databases">
        <title>Complete sequence of Halorhodospira halophila SL1.</title>
        <authorList>
            <consortium name="US DOE Joint Genome Institute"/>
            <person name="Copeland A."/>
            <person name="Lucas S."/>
            <person name="Lapidus A."/>
            <person name="Barry K."/>
            <person name="Detter J.C."/>
            <person name="Glavina del Rio T."/>
            <person name="Hammon N."/>
            <person name="Israni S."/>
            <person name="Dalin E."/>
            <person name="Tice H."/>
            <person name="Pitluck S."/>
            <person name="Saunders E."/>
            <person name="Brettin T."/>
            <person name="Bruce D."/>
            <person name="Han C."/>
            <person name="Tapia R."/>
            <person name="Schmutz J."/>
            <person name="Larimer F."/>
            <person name="Land M."/>
            <person name="Hauser L."/>
            <person name="Kyrpides N."/>
            <person name="Mikhailova N."/>
            <person name="Hoff W."/>
            <person name="Richardson P."/>
        </authorList>
    </citation>
    <scope>NUCLEOTIDE SEQUENCE [LARGE SCALE GENOMIC DNA]</scope>
    <source>
        <strain>DSM 244 / SL1</strain>
    </source>
</reference>
<comment type="function">
    <text evidence="1">The alpha subunit is responsible for the aldol cleavage of indoleglycerol phosphate to indole and glyceraldehyde 3-phosphate.</text>
</comment>
<comment type="catalytic activity">
    <reaction evidence="1">
        <text>(1S,2R)-1-C-(indol-3-yl)glycerol 3-phosphate + L-serine = D-glyceraldehyde 3-phosphate + L-tryptophan + H2O</text>
        <dbReference type="Rhea" id="RHEA:10532"/>
        <dbReference type="ChEBI" id="CHEBI:15377"/>
        <dbReference type="ChEBI" id="CHEBI:33384"/>
        <dbReference type="ChEBI" id="CHEBI:57912"/>
        <dbReference type="ChEBI" id="CHEBI:58866"/>
        <dbReference type="ChEBI" id="CHEBI:59776"/>
        <dbReference type="EC" id="4.2.1.20"/>
    </reaction>
</comment>
<comment type="pathway">
    <text evidence="1">Amino-acid biosynthesis; L-tryptophan biosynthesis; L-tryptophan from chorismate: step 5/5.</text>
</comment>
<comment type="subunit">
    <text evidence="1">Tetramer of two alpha and two beta chains.</text>
</comment>
<comment type="similarity">
    <text evidence="1">Belongs to the TrpA family.</text>
</comment>
<organism>
    <name type="scientific">Halorhodospira halophila (strain DSM 244 / SL1)</name>
    <name type="common">Ectothiorhodospira halophila (strain DSM 244 / SL1)</name>
    <dbReference type="NCBI Taxonomy" id="349124"/>
    <lineage>
        <taxon>Bacteria</taxon>
        <taxon>Pseudomonadati</taxon>
        <taxon>Pseudomonadota</taxon>
        <taxon>Gammaproteobacteria</taxon>
        <taxon>Chromatiales</taxon>
        <taxon>Ectothiorhodospiraceae</taxon>
        <taxon>Halorhodospira</taxon>
    </lineage>
</organism>
<accession>A1WY05</accession>